<evidence type="ECO:0000250" key="1">
    <source>
        <dbReference type="UniProtKB" id="P0C0A3"/>
    </source>
</evidence>
<evidence type="ECO:0000255" key="2"/>
<evidence type="ECO:0000269" key="3">
    <source>
    </source>
</evidence>
<evidence type="ECO:0000269" key="4">
    <source>
    </source>
</evidence>
<evidence type="ECO:0000269" key="5">
    <source>
    </source>
</evidence>
<evidence type="ECO:0000269" key="6">
    <source>
    </source>
</evidence>
<evidence type="ECO:0000269" key="7">
    <source>
    </source>
</evidence>
<evidence type="ECO:0000269" key="8">
    <source>
    </source>
</evidence>
<evidence type="ECO:0000269" key="9">
    <source>
    </source>
</evidence>
<evidence type="ECO:0000305" key="10"/>
<evidence type="ECO:0000305" key="11">
    <source>
    </source>
</evidence>
<evidence type="ECO:0007744" key="12">
    <source>
    </source>
</evidence>
<evidence type="ECO:0007829" key="13">
    <source>
        <dbReference type="PDB" id="3HTU"/>
    </source>
</evidence>
<sequence length="201" mass="23485">MGNLFGRKKQSRVTEQDKAILQLKQQRDKLRQYQKRIAQQLERERALARQLLRDGRKERAKLLLKKKRYQEQLLDRTENQISSLEAMVQSIEFTQIEMKVMEGLQFGNECLNKMHQVMSIEEVERILDETQEAVEYQRQIDELLAGSFTQEDEDAILEELSAITQEQIELPEVPSEPLPEKIPENVPVKARPRQAELVAAS</sequence>
<gene>
    <name type="primary">CHMP6</name>
    <name type="synonym">VPS20</name>
</gene>
<reference key="1">
    <citation type="journal article" date="2004" name="Biochem. J.">
        <title>Structure and function of human Vps20 and Snf7 proteins.</title>
        <authorList>
            <person name="Peck J.W."/>
            <person name="Bowden E.T."/>
            <person name="Burbelo P.D."/>
        </authorList>
    </citation>
    <scope>NUCLEOTIDE SEQUENCE [MRNA]</scope>
    <scope>SUBCELLULAR LOCATION</scope>
</reference>
<reference key="2">
    <citation type="journal article" date="2004" name="Nat. Genet.">
        <title>Complete sequencing and characterization of 21,243 full-length human cDNAs.</title>
        <authorList>
            <person name="Ota T."/>
            <person name="Suzuki Y."/>
            <person name="Nishikawa T."/>
            <person name="Otsuki T."/>
            <person name="Sugiyama T."/>
            <person name="Irie R."/>
            <person name="Wakamatsu A."/>
            <person name="Hayashi K."/>
            <person name="Sato H."/>
            <person name="Nagai K."/>
            <person name="Kimura K."/>
            <person name="Makita H."/>
            <person name="Sekine M."/>
            <person name="Obayashi M."/>
            <person name="Nishi T."/>
            <person name="Shibahara T."/>
            <person name="Tanaka T."/>
            <person name="Ishii S."/>
            <person name="Yamamoto J."/>
            <person name="Saito K."/>
            <person name="Kawai Y."/>
            <person name="Isono Y."/>
            <person name="Nakamura Y."/>
            <person name="Nagahari K."/>
            <person name="Murakami K."/>
            <person name="Yasuda T."/>
            <person name="Iwayanagi T."/>
            <person name="Wagatsuma M."/>
            <person name="Shiratori A."/>
            <person name="Sudo H."/>
            <person name="Hosoiri T."/>
            <person name="Kaku Y."/>
            <person name="Kodaira H."/>
            <person name="Kondo H."/>
            <person name="Sugawara M."/>
            <person name="Takahashi M."/>
            <person name="Kanda K."/>
            <person name="Yokoi T."/>
            <person name="Furuya T."/>
            <person name="Kikkawa E."/>
            <person name="Omura Y."/>
            <person name="Abe K."/>
            <person name="Kamihara K."/>
            <person name="Katsuta N."/>
            <person name="Sato K."/>
            <person name="Tanikawa M."/>
            <person name="Yamazaki M."/>
            <person name="Ninomiya K."/>
            <person name="Ishibashi T."/>
            <person name="Yamashita H."/>
            <person name="Murakawa K."/>
            <person name="Fujimori K."/>
            <person name="Tanai H."/>
            <person name="Kimata M."/>
            <person name="Watanabe M."/>
            <person name="Hiraoka S."/>
            <person name="Chiba Y."/>
            <person name="Ishida S."/>
            <person name="Ono Y."/>
            <person name="Takiguchi S."/>
            <person name="Watanabe S."/>
            <person name="Yosida M."/>
            <person name="Hotuta T."/>
            <person name="Kusano J."/>
            <person name="Kanehori K."/>
            <person name="Takahashi-Fujii A."/>
            <person name="Hara H."/>
            <person name="Tanase T.-O."/>
            <person name="Nomura Y."/>
            <person name="Togiya S."/>
            <person name="Komai F."/>
            <person name="Hara R."/>
            <person name="Takeuchi K."/>
            <person name="Arita M."/>
            <person name="Imose N."/>
            <person name="Musashino K."/>
            <person name="Yuuki H."/>
            <person name="Oshima A."/>
            <person name="Sasaki N."/>
            <person name="Aotsuka S."/>
            <person name="Yoshikawa Y."/>
            <person name="Matsunawa H."/>
            <person name="Ichihara T."/>
            <person name="Shiohata N."/>
            <person name="Sano S."/>
            <person name="Moriya S."/>
            <person name="Momiyama H."/>
            <person name="Satoh N."/>
            <person name="Takami S."/>
            <person name="Terashima Y."/>
            <person name="Suzuki O."/>
            <person name="Nakagawa S."/>
            <person name="Senoh A."/>
            <person name="Mizoguchi H."/>
            <person name="Goto Y."/>
            <person name="Shimizu F."/>
            <person name="Wakebe H."/>
            <person name="Hishigaki H."/>
            <person name="Watanabe T."/>
            <person name="Sugiyama A."/>
            <person name="Takemoto M."/>
            <person name="Kawakami B."/>
            <person name="Yamazaki M."/>
            <person name="Watanabe K."/>
            <person name="Kumagai A."/>
            <person name="Itakura S."/>
            <person name="Fukuzumi Y."/>
            <person name="Fujimori Y."/>
            <person name="Komiyama M."/>
            <person name="Tashiro H."/>
            <person name="Tanigami A."/>
            <person name="Fujiwara T."/>
            <person name="Ono T."/>
            <person name="Yamada K."/>
            <person name="Fujii Y."/>
            <person name="Ozaki K."/>
            <person name="Hirao M."/>
            <person name="Ohmori Y."/>
            <person name="Kawabata A."/>
            <person name="Hikiji T."/>
            <person name="Kobatake N."/>
            <person name="Inagaki H."/>
            <person name="Ikema Y."/>
            <person name="Okamoto S."/>
            <person name="Okitani R."/>
            <person name="Kawakami T."/>
            <person name="Noguchi S."/>
            <person name="Itoh T."/>
            <person name="Shigeta K."/>
            <person name="Senba T."/>
            <person name="Matsumura K."/>
            <person name="Nakajima Y."/>
            <person name="Mizuno T."/>
            <person name="Morinaga M."/>
            <person name="Sasaki M."/>
            <person name="Togashi T."/>
            <person name="Oyama M."/>
            <person name="Hata H."/>
            <person name="Watanabe M."/>
            <person name="Komatsu T."/>
            <person name="Mizushima-Sugano J."/>
            <person name="Satoh T."/>
            <person name="Shirai Y."/>
            <person name="Takahashi Y."/>
            <person name="Nakagawa K."/>
            <person name="Okumura K."/>
            <person name="Nagase T."/>
            <person name="Nomura N."/>
            <person name="Kikuchi H."/>
            <person name="Masuho Y."/>
            <person name="Yamashita R."/>
            <person name="Nakai K."/>
            <person name="Yada T."/>
            <person name="Nakamura Y."/>
            <person name="Ohara O."/>
            <person name="Isogai T."/>
            <person name="Sugano S."/>
        </authorList>
    </citation>
    <scope>NUCLEOTIDE SEQUENCE [LARGE SCALE MRNA]</scope>
    <source>
        <tissue>Embryo</tissue>
        <tissue>Synovial cell</tissue>
    </source>
</reference>
<reference key="3">
    <citation type="submission" date="2004-06" db="EMBL/GenBank/DDBJ databases">
        <title>Cloning of human full open reading frames in Gateway(TM) system entry vector (pDONR201).</title>
        <authorList>
            <person name="Ebert L."/>
            <person name="Schick M."/>
            <person name="Neubert P."/>
            <person name="Schatten R."/>
            <person name="Henze S."/>
            <person name="Korn B."/>
        </authorList>
    </citation>
    <scope>NUCLEOTIDE SEQUENCE [LARGE SCALE MRNA]</scope>
</reference>
<reference key="4">
    <citation type="submission" date="2005-04" db="EMBL/GenBank/DDBJ databases">
        <authorList>
            <person name="Suzuki Y."/>
            <person name="Sugano S."/>
            <person name="Totoki Y."/>
            <person name="Toyoda A."/>
            <person name="Takeda T."/>
            <person name="Sakaki Y."/>
            <person name="Tanaka A."/>
            <person name="Yokoyama S."/>
        </authorList>
    </citation>
    <scope>NUCLEOTIDE SEQUENCE [LARGE SCALE MRNA]</scope>
    <source>
        <tissue>Kidney proximal tubule</tissue>
    </source>
</reference>
<reference key="5">
    <citation type="journal article" date="2004" name="Genome Res.">
        <title>The status, quality, and expansion of the NIH full-length cDNA project: the Mammalian Gene Collection (MGC).</title>
        <authorList>
            <consortium name="The MGC Project Team"/>
        </authorList>
    </citation>
    <scope>NUCLEOTIDE SEQUENCE [LARGE SCALE MRNA]</scope>
    <source>
        <tissue>Uterus</tissue>
    </source>
</reference>
<reference key="6">
    <citation type="journal article" date="2003" name="Cell">
        <title>The protein network of HIV budding.</title>
        <authorList>
            <person name="von Schwedler U.K."/>
            <person name="Stuchell M."/>
            <person name="Mueller B."/>
            <person name="Ward D.M."/>
            <person name="Chung H.-Y."/>
            <person name="Morita E."/>
            <person name="Wang H.E."/>
            <person name="Davis T."/>
            <person name="He G.P."/>
            <person name="Cimbora D.M."/>
            <person name="Scott A."/>
            <person name="Kraeusslich H.-G."/>
            <person name="Kaplan J."/>
            <person name="Morham S.G."/>
            <person name="Sundquist W.I."/>
        </authorList>
    </citation>
    <scope>INTERACTION WITH VPS25; CHMP4B; VPS4A AND VPS4B</scope>
</reference>
<reference key="7">
    <citation type="journal article" date="2003" name="Proc. Natl. Acad. Sci. U.S.A.">
        <title>Divergent retroviral late-budding domains recruit vacuolar protein sorting factors by using alternative adaptor proteins.</title>
        <authorList>
            <person name="Martin-Serrano J."/>
            <person name="Yarovoy A."/>
            <person name="Perez-Caballero D."/>
            <person name="Bieniasz P.D."/>
        </authorList>
    </citation>
    <scope>INTERACTION WITH CHMP4A; CHMP4B; CHMP4C; VPS25; SNF8 AND VPS36</scope>
</reference>
<reference key="8">
    <citation type="journal article" date="2003" name="Proc. Natl. Acad. Sci. U.S.A.">
        <authorList>
            <person name="Martin-Serrano J."/>
            <person name="Yarovoy A."/>
            <person name="Perez-Caballero D."/>
            <person name="Bieniasz P.D."/>
        </authorList>
    </citation>
    <scope>ERRATUM OF PUBMED:14519844</scope>
</reference>
<reference key="9">
    <citation type="journal article" date="2005" name="Biochem. J.">
        <title>Human CHMP6, a myristoylated ESCRT-III protein, interacts directly with an ESCRT-II component EAP20 and regulates endosomal cargo sorting.</title>
        <authorList>
            <person name="Yorikawa C."/>
            <person name="Shibata H."/>
            <person name="Waguri S."/>
            <person name="Hatta K."/>
            <person name="Horii M."/>
            <person name="Katoh K."/>
            <person name="Kobayashi T."/>
            <person name="Uchiyama Y."/>
            <person name="Maki M."/>
        </authorList>
    </citation>
    <scope>SUBCELLULAR LOCATION</scope>
    <scope>TISSUE SPECIFICITY</scope>
    <scope>MYRISTOYLATION AT GLY-2</scope>
    <scope>INTERACTION WITH CHMP4B AND VPS25</scope>
    <scope>MUTAGENESIS OF GLY-2 AND ARG-49</scope>
</reference>
<reference key="10">
    <citation type="journal article" date="2007" name="Traffic">
        <title>Structure/function analysis of four core ESCRT-III proteins reveals common regulatory role for extreme C-terminal domain.</title>
        <authorList>
            <person name="Shim S."/>
            <person name="Kimpler L.A."/>
            <person name="Hanson P.I."/>
        </authorList>
    </citation>
    <scope>AUTOINHIBITORY MECHANISM</scope>
    <scope>INTERACTION</scope>
    <scope>MUTAGENESIS OF 168-ILE--SER-201</scope>
</reference>
<reference key="11">
    <citation type="journal article" date="2011" name="BMC Syst. Biol.">
        <title>Initial characterization of the human central proteome.</title>
        <authorList>
            <person name="Burkard T.R."/>
            <person name="Planyavsky M."/>
            <person name="Kaupe I."/>
            <person name="Breitwieser F.P."/>
            <person name="Buerckstuemmer T."/>
            <person name="Bennett K.L."/>
            <person name="Superti-Furga G."/>
            <person name="Colinge J."/>
        </authorList>
    </citation>
    <scope>IDENTIFICATION BY MASS SPECTROMETRY [LARGE SCALE ANALYSIS]</scope>
</reference>
<reference key="12">
    <citation type="journal article" date="2011" name="J. Virol.">
        <title>Mechanism of inhibition of retrovirus release from cells by interferon-induced gene ISG15.</title>
        <authorList>
            <person name="Kuang Z."/>
            <person name="Seo E.J."/>
            <person name="Leis J."/>
        </authorList>
    </citation>
    <scope>ISGYLATION</scope>
    <scope>INTERACTION WITH VPS4A</scope>
</reference>
<reference key="13">
    <citation type="journal article" date="2013" name="J. Proteome Res.">
        <title>Toward a comprehensive characterization of a human cancer cell phosphoproteome.</title>
        <authorList>
            <person name="Zhou H."/>
            <person name="Di Palma S."/>
            <person name="Preisinger C."/>
            <person name="Peng M."/>
            <person name="Polat A.N."/>
            <person name="Heck A.J."/>
            <person name="Mohammed S."/>
        </authorList>
    </citation>
    <scope>PHOSPHORYLATION [LARGE SCALE ANALYSIS] AT THR-130</scope>
    <scope>IDENTIFICATION BY MASS SPECTROMETRY [LARGE SCALE ANALYSIS]</scope>
    <source>
        <tissue>Cervix carcinoma</tissue>
    </source>
</reference>
<reference key="14">
    <citation type="journal article" date="2014" name="J. Proteomics">
        <title>An enzyme assisted RP-RPLC approach for in-depth analysis of human liver phosphoproteome.</title>
        <authorList>
            <person name="Bian Y."/>
            <person name="Song C."/>
            <person name="Cheng K."/>
            <person name="Dong M."/>
            <person name="Wang F."/>
            <person name="Huang J."/>
            <person name="Sun D."/>
            <person name="Wang L."/>
            <person name="Ye M."/>
            <person name="Zou H."/>
        </authorList>
    </citation>
    <scope>IDENTIFICATION BY MASS SPECTROMETRY [LARGE SCALE ANALYSIS]</scope>
    <source>
        <tissue>Liver</tissue>
    </source>
</reference>
<reference key="15">
    <citation type="journal article" date="2014" name="Nat. Commun.">
        <title>Global profiling of co- and post-translationally N-myristoylated proteomes in human cells.</title>
        <authorList>
            <person name="Thinon E."/>
            <person name="Serwa R.A."/>
            <person name="Broncel M."/>
            <person name="Brannigan J.A."/>
            <person name="Brassat U."/>
            <person name="Wright M.H."/>
            <person name="Heal W.P."/>
            <person name="Wilkinson A.J."/>
            <person name="Mann D.J."/>
            <person name="Tate E.W."/>
        </authorList>
    </citation>
    <scope>MYRISTOYLATION AT GLY-2</scope>
    <scope>CLEAVAGE OF INITIATOR METHIONINE</scope>
    <scope>IDENTIFICATION BY MASS SPECTROMETRY</scope>
</reference>
<reference key="16">
    <citation type="journal article" date="2015" name="Proteomics">
        <title>N-terminome analysis of the human mitochondrial proteome.</title>
        <authorList>
            <person name="Vaca Jacome A.S."/>
            <person name="Rabilloud T."/>
            <person name="Schaeffer-Reiss C."/>
            <person name="Rompais M."/>
            <person name="Ayoub D."/>
            <person name="Lane L."/>
            <person name="Bairoch A."/>
            <person name="Van Dorsselaer A."/>
            <person name="Carapito C."/>
        </authorList>
    </citation>
    <scope>IDENTIFICATION BY MASS SPECTROMETRY [LARGE SCALE ANALYSIS]</scope>
</reference>
<reference key="17">
    <citation type="journal article" date="2008" name="Dev. Cell">
        <title>Two distinct modes of ESCRT-III recognition are required for VPS4 functions in lysosomal protein targeting and HIV-1 budding.</title>
        <authorList>
            <person name="Kieffer C."/>
            <person name="Skalicky J.J."/>
            <person name="Morita E."/>
            <person name="De Domenico I."/>
            <person name="Ward D.M."/>
            <person name="Kaplan J."/>
            <person name="Sundquist W.I."/>
        </authorList>
    </citation>
    <scope>STRUCTURE BY NMR OF 168-179 IN COMPLEX WITH VPS4A</scope>
    <scope>MUTAGENESIS OF LEU-170; VAL-173 AND LEU-178</scope>
</reference>
<organism>
    <name type="scientific">Homo sapiens</name>
    <name type="common">Human</name>
    <dbReference type="NCBI Taxonomy" id="9606"/>
    <lineage>
        <taxon>Eukaryota</taxon>
        <taxon>Metazoa</taxon>
        <taxon>Chordata</taxon>
        <taxon>Craniata</taxon>
        <taxon>Vertebrata</taxon>
        <taxon>Euteleostomi</taxon>
        <taxon>Mammalia</taxon>
        <taxon>Eutheria</taxon>
        <taxon>Euarchontoglires</taxon>
        <taxon>Primates</taxon>
        <taxon>Haplorrhini</taxon>
        <taxon>Catarrhini</taxon>
        <taxon>Hominidae</taxon>
        <taxon>Homo</taxon>
    </lineage>
</organism>
<keyword id="KW-0002">3D-structure</keyword>
<keyword id="KW-0175">Coiled coil</keyword>
<keyword id="KW-0967">Endosome</keyword>
<keyword id="KW-0449">Lipoprotein</keyword>
<keyword id="KW-0472">Membrane</keyword>
<keyword id="KW-0519">Myristate</keyword>
<keyword id="KW-0597">Phosphoprotein</keyword>
<keyword id="KW-0653">Protein transport</keyword>
<keyword id="KW-1267">Proteomics identification</keyword>
<keyword id="KW-1185">Reference proteome</keyword>
<keyword id="KW-0813">Transport</keyword>
<keyword id="KW-0832">Ubl conjugation</keyword>
<comment type="function">
    <text>Probable core component of the endosomal sorting required for transport complex III (ESCRT-III) which is involved in multivesicular bodies (MVBs) formation and sorting of endosomal cargo proteins into MVBs. MVBs contain intraluminal vesicles (ILVs) that are generated by invagination and scission from the limiting membrane of the endosome and mostly are delivered to lysosomes enabling degradation of membrane proteins, such as stimulated growth factor receptors, lysosomal enzymes and lipids. The MVB pathway appears to require the sequential function of ESCRT-O, -I,-II and -III complexes. ESCRT-III proteins mostly dissociate from the invaginating membrane before the ILV is released. The ESCRT machinery also functions in topologically equivalent membrane fission events, such as the terminal stages of cytokinesis and the budding of enveloped viruses (HIV-1 and other lentiviruses). ESCRT-III proteins are believed to mediate the necessary vesicle extrusion and/or membrane fission activities, possibly in conjunction with the AAA ATPase VPS4. In the ESCRT-III complex, it probably serves as an acceptor for the ESCRT-II complex on endosomal membranes.</text>
</comment>
<comment type="subunit">
    <text evidence="3 4 5 6 7 8">Probable core component of the endosomal sorting required for transport complex III (ESCRT-III). ESCRT-III components are thought to multimerize to form a flat lattice on the perimeter membrane of the endosome. Several assembly forms of ESCRT-III may exist that interact and act sequentially. Interacts with VPS4A; the interaction is direct. Interacts with VPS4B; the interaction is direct. Interacts with CHMP4A, CHMP4B and CHMP4C. Interacts with SNF8, VPS25 and VPS36.</text>
</comment>
<comment type="interaction">
    <interactant intactId="EBI-1049648">
        <id>Q96FZ7</id>
    </interactant>
    <interactant intactId="EBI-10968534">
        <id>P50570-2</id>
        <label>DNM2</label>
    </interactant>
    <organismsDiffer>false</organismsDiffer>
    <experiments>3</experiments>
</comment>
<comment type="interaction">
    <interactant intactId="EBI-1049648">
        <id>Q96FZ7</id>
    </interactant>
    <interactant intactId="EBI-395421">
        <id>Q16637</id>
        <label>SMN2</label>
    </interactant>
    <organismsDiffer>false</organismsDiffer>
    <experiments>3</experiments>
</comment>
<comment type="interaction">
    <interactant intactId="EBI-1049648">
        <id>Q96FZ7</id>
    </interactant>
    <interactant intactId="EBI-25847109">
        <id>O14656-2</id>
        <label>TOR1A</label>
    </interactant>
    <organismsDiffer>false</organismsDiffer>
    <experiments>3</experiments>
</comment>
<comment type="interaction">
    <interactant intactId="EBI-1049648">
        <id>Q96FZ7</id>
    </interactant>
    <interactant intactId="EBI-741945">
        <id>Q9BRG1</id>
        <label>VPS25</label>
    </interactant>
    <organismsDiffer>false</organismsDiffer>
    <experiments>8</experiments>
</comment>
<comment type="subcellular location">
    <subcellularLocation>
        <location>Endomembrane system</location>
    </subcellularLocation>
    <subcellularLocation>
        <location>Endosome membrane</location>
        <topology>Lipid-anchor</topology>
    </subcellularLocation>
    <subcellularLocation>
        <location evidence="10">Late endosome membrane</location>
    </subcellularLocation>
    <subcellularLocation>
        <location evidence="10">Membrane</location>
        <topology evidence="10">Lipid-anchor</topology>
    </subcellularLocation>
    <text>Localizes to endosomal membranes.</text>
</comment>
<comment type="tissue specificity">
    <text evidence="5">Ubiquitously expressed.</text>
</comment>
<comment type="domain">
    <text>The acidic C-terminus and the basic N-termminus are thought to render the protein in a closed, soluble and inactive conformation through an autoinhibitory intramolecular interaction. The open and active conformation, which enables membrane binding and oligomerization, is achieved by interaction with other cellular binding partners, probably including other ESCRT components.</text>
</comment>
<comment type="PTM">
    <text evidence="8">ISGylated in a CHMP5-dependent manner. Isgylation weakens its interaction with VPS4A.</text>
</comment>
<comment type="similarity">
    <text evidence="10">Belongs to the SNF7 family.</text>
</comment>
<feature type="initiator methionine" description="Removed" evidence="9">
    <location>
        <position position="1"/>
    </location>
</feature>
<feature type="chain" id="PRO_0000211508" description="Charged multivesicular body protein 6">
    <location>
        <begin position="2"/>
        <end position="201"/>
    </location>
</feature>
<feature type="region of interest" description="Interaction with VPS4A">
    <location>
        <begin position="170"/>
        <end position="181"/>
    </location>
</feature>
<feature type="coiled-coil region" evidence="2">
    <location>
        <begin position="10"/>
        <end position="145"/>
    </location>
</feature>
<feature type="short sequence motif" description="Type-2 MIT-interacting motif">
    <location>
        <begin position="168"/>
        <end position="179"/>
    </location>
</feature>
<feature type="modified residue" description="Phosphoserine" evidence="1">
    <location>
        <position position="119"/>
    </location>
</feature>
<feature type="modified residue" description="Phosphothreonine" evidence="12">
    <location>
        <position position="130"/>
    </location>
</feature>
<feature type="lipid moiety-binding region" description="N-myristoyl glycine" evidence="9 11">
    <location>
        <position position="2"/>
    </location>
</feature>
<feature type="sequence variant" id="VAR_061807" description="In dbSNP:rs61037507.">
    <original>G</original>
    <variation>S</variation>
    <location>
        <position position="55"/>
    </location>
</feature>
<feature type="mutagenesis site" description="Abolishes myristoylation." evidence="5">
    <original>G</original>
    <variation>A</variation>
    <location>
        <position position="2"/>
    </location>
</feature>
<feature type="mutagenesis site" description="Does not affect the subcellular location." evidence="5">
    <original>R</original>
    <variation>E</variation>
    <location>
        <position position="49"/>
    </location>
</feature>
<feature type="mutagenesis site" description="Membrane association; releases autoinhibition." evidence="6">
    <location>
        <begin position="168"/>
        <end position="201"/>
    </location>
</feature>
<feature type="mutagenesis site" description="Abolishes interaction with VPS4A." evidence="7">
    <original>L</original>
    <variation>D</variation>
    <location>
        <position position="170"/>
    </location>
</feature>
<feature type="mutagenesis site" description="Abolishes interaction with VPS4A." evidence="7">
    <original>V</original>
    <variation>D</variation>
    <location>
        <position position="173"/>
    </location>
</feature>
<feature type="mutagenesis site" description="Reduces interaction with VPS4A." evidence="7">
    <original>L</original>
    <variation>D</variation>
    <location>
        <position position="178"/>
    </location>
</feature>
<feature type="sequence conflict" description="In Ref. 4; BAD96907." evidence="10" ref="4">
    <original>D</original>
    <variation>G</variation>
    <location>
        <position position="17"/>
    </location>
</feature>
<feature type="sequence conflict" description="In Ref. 2; BAB13901." evidence="10" ref="2">
    <original>F</original>
    <variation>L</variation>
    <location>
        <position position="106"/>
    </location>
</feature>
<feature type="helix" evidence="13">
    <location>
        <begin position="15"/>
        <end position="43"/>
    </location>
</feature>
<dbReference type="EMBL" id="AY329087">
    <property type="protein sequence ID" value="AAQ91196.1"/>
    <property type="molecule type" value="mRNA"/>
</dbReference>
<dbReference type="EMBL" id="AK021811">
    <property type="protein sequence ID" value="BAB13901.1"/>
    <property type="molecule type" value="mRNA"/>
</dbReference>
<dbReference type="EMBL" id="CR457284">
    <property type="protein sequence ID" value="CAG33565.1"/>
    <property type="molecule type" value="mRNA"/>
</dbReference>
<dbReference type="EMBL" id="AK223187">
    <property type="protein sequence ID" value="BAD96907.1"/>
    <property type="molecule type" value="mRNA"/>
</dbReference>
<dbReference type="EMBL" id="AK292105">
    <property type="protein sequence ID" value="BAF84794.1"/>
    <property type="molecule type" value="mRNA"/>
</dbReference>
<dbReference type="EMBL" id="BC010108">
    <property type="protein sequence ID" value="AAH10108.1"/>
    <property type="molecule type" value="mRNA"/>
</dbReference>
<dbReference type="CCDS" id="CCDS11774.1"/>
<dbReference type="RefSeq" id="NP_078867.2">
    <property type="nucleotide sequence ID" value="NM_024591.4"/>
</dbReference>
<dbReference type="PDB" id="2K3W">
    <property type="method" value="NMR"/>
    <property type="chains" value="B=166-181"/>
</dbReference>
<dbReference type="PDB" id="3HTU">
    <property type="method" value="X-ray"/>
    <property type="resolution" value="2.00 A"/>
    <property type="chains" value="B/D/F/H=11-48"/>
</dbReference>
<dbReference type="PDBsum" id="2K3W"/>
<dbReference type="PDBsum" id="3HTU"/>
<dbReference type="SMR" id="Q96FZ7"/>
<dbReference type="BioGRID" id="122771">
    <property type="interactions" value="60"/>
</dbReference>
<dbReference type="ComplexPortal" id="CPX-329">
    <property type="entry name" value="ESCRT-III complex"/>
</dbReference>
<dbReference type="CORUM" id="Q96FZ7"/>
<dbReference type="FunCoup" id="Q96FZ7">
    <property type="interactions" value="1493"/>
</dbReference>
<dbReference type="IntAct" id="Q96FZ7">
    <property type="interactions" value="29"/>
</dbReference>
<dbReference type="MINT" id="Q96FZ7"/>
<dbReference type="STRING" id="9606.ENSP00000317468"/>
<dbReference type="iPTMnet" id="Q96FZ7"/>
<dbReference type="MetOSite" id="Q96FZ7"/>
<dbReference type="PhosphoSitePlus" id="Q96FZ7"/>
<dbReference type="BioMuta" id="CHMP6"/>
<dbReference type="DMDM" id="73917777"/>
<dbReference type="jPOST" id="Q96FZ7"/>
<dbReference type="MassIVE" id="Q96FZ7"/>
<dbReference type="PaxDb" id="9606-ENSP00000317468"/>
<dbReference type="PeptideAtlas" id="Q96FZ7"/>
<dbReference type="ProteomicsDB" id="76576"/>
<dbReference type="Pumba" id="Q96FZ7"/>
<dbReference type="Antibodypedia" id="19789">
    <property type="antibodies" value="156 antibodies from 24 providers"/>
</dbReference>
<dbReference type="DNASU" id="79643"/>
<dbReference type="Ensembl" id="ENST00000325167.9">
    <property type="protein sequence ID" value="ENSP00000317468.5"/>
    <property type="gene ID" value="ENSG00000176108.9"/>
</dbReference>
<dbReference type="GeneID" id="79643"/>
<dbReference type="KEGG" id="hsa:79643"/>
<dbReference type="MANE-Select" id="ENST00000325167.9">
    <property type="protein sequence ID" value="ENSP00000317468.5"/>
    <property type="RefSeq nucleotide sequence ID" value="NM_024591.5"/>
    <property type="RefSeq protein sequence ID" value="NP_078867.2"/>
</dbReference>
<dbReference type="UCSC" id="uc002jyw.4">
    <property type="organism name" value="human"/>
</dbReference>
<dbReference type="AGR" id="HGNC:25675"/>
<dbReference type="CTD" id="79643"/>
<dbReference type="DisGeNET" id="79643"/>
<dbReference type="GeneCards" id="CHMP6"/>
<dbReference type="HGNC" id="HGNC:25675">
    <property type="gene designation" value="CHMP6"/>
</dbReference>
<dbReference type="HPA" id="ENSG00000176108">
    <property type="expression patterns" value="Low tissue specificity"/>
</dbReference>
<dbReference type="MIM" id="610901">
    <property type="type" value="gene"/>
</dbReference>
<dbReference type="neXtProt" id="NX_Q96FZ7"/>
<dbReference type="OpenTargets" id="ENSG00000176108"/>
<dbReference type="PharmGKB" id="PA142672114"/>
<dbReference type="VEuPathDB" id="HostDB:ENSG00000176108"/>
<dbReference type="eggNOG" id="KOG2910">
    <property type="taxonomic scope" value="Eukaryota"/>
</dbReference>
<dbReference type="GeneTree" id="ENSGT00720000108863"/>
<dbReference type="HOGENOM" id="CLU_086201_3_0_1"/>
<dbReference type="InParanoid" id="Q96FZ7"/>
<dbReference type="OMA" id="RAKQPAM"/>
<dbReference type="OrthoDB" id="441172at2759"/>
<dbReference type="PAN-GO" id="Q96FZ7">
    <property type="GO annotations" value="4 GO annotations based on evolutionary models"/>
</dbReference>
<dbReference type="PhylomeDB" id="Q96FZ7"/>
<dbReference type="TreeFam" id="TF105929"/>
<dbReference type="PathwayCommons" id="Q96FZ7"/>
<dbReference type="Reactome" id="R-HSA-162588">
    <property type="pathway name" value="Budding and maturation of HIV virion"/>
</dbReference>
<dbReference type="Reactome" id="R-HSA-1632852">
    <property type="pathway name" value="Macroautophagy"/>
</dbReference>
<dbReference type="Reactome" id="R-HSA-5620971">
    <property type="pathway name" value="Pyroptosis"/>
</dbReference>
<dbReference type="Reactome" id="R-HSA-917729">
    <property type="pathway name" value="Endosomal Sorting Complex Required For Transport (ESCRT)"/>
</dbReference>
<dbReference type="Reactome" id="R-HSA-9610379">
    <property type="pathway name" value="HCMV Late Events"/>
</dbReference>
<dbReference type="Reactome" id="R-HSA-9615710">
    <property type="pathway name" value="Late endosomal microautophagy"/>
</dbReference>
<dbReference type="Reactome" id="R-HSA-9668328">
    <property type="pathway name" value="Sealing of the nuclear envelope (NE) by ESCRT-III"/>
</dbReference>
<dbReference type="Reactome" id="R-HSA-9679504">
    <property type="pathway name" value="Translation of Replicase and Assembly of the Replication Transcription Complex"/>
</dbReference>
<dbReference type="Reactome" id="R-HSA-9694676">
    <property type="pathway name" value="Translation of Replicase and Assembly of the Replication Transcription Complex"/>
</dbReference>
<dbReference type="SignaLink" id="Q96FZ7"/>
<dbReference type="SIGNOR" id="Q96FZ7"/>
<dbReference type="BioGRID-ORCS" id="79643">
    <property type="hits" value="803 hits in 1169 CRISPR screens"/>
</dbReference>
<dbReference type="CD-CODE" id="1A18FFC4">
    <property type="entry name" value="Paraspeckle"/>
</dbReference>
<dbReference type="EvolutionaryTrace" id="Q96FZ7"/>
<dbReference type="GeneWiki" id="CHMP6"/>
<dbReference type="GenomeRNAi" id="79643"/>
<dbReference type="Pharos" id="Q96FZ7">
    <property type="development level" value="Tbio"/>
</dbReference>
<dbReference type="PRO" id="PR:Q96FZ7"/>
<dbReference type="Proteomes" id="UP000005640">
    <property type="component" value="Chromosome 17"/>
</dbReference>
<dbReference type="RNAct" id="Q96FZ7">
    <property type="molecule type" value="protein"/>
</dbReference>
<dbReference type="Bgee" id="ENSG00000176108">
    <property type="expression patterns" value="Expressed in apex of heart and 176 other cell types or tissues"/>
</dbReference>
<dbReference type="ExpressionAtlas" id="Q96FZ7">
    <property type="expression patterns" value="baseline and differential"/>
</dbReference>
<dbReference type="GO" id="GO:1904930">
    <property type="term" value="C:amphisome membrane"/>
    <property type="evidence" value="ECO:0000314"/>
    <property type="project" value="ComplexPortal"/>
</dbReference>
<dbReference type="GO" id="GO:0000421">
    <property type="term" value="C:autophagosome membrane"/>
    <property type="evidence" value="ECO:0000314"/>
    <property type="project" value="ComplexPortal"/>
</dbReference>
<dbReference type="GO" id="GO:0005829">
    <property type="term" value="C:cytosol"/>
    <property type="evidence" value="ECO:0000304"/>
    <property type="project" value="Reactome"/>
</dbReference>
<dbReference type="GO" id="GO:0010008">
    <property type="term" value="C:endosome membrane"/>
    <property type="evidence" value="ECO:0000314"/>
    <property type="project" value="UniProtKB"/>
</dbReference>
<dbReference type="GO" id="GO:0000815">
    <property type="term" value="C:ESCRT III complex"/>
    <property type="evidence" value="ECO:0000314"/>
    <property type="project" value="UniProtKB"/>
</dbReference>
<dbReference type="GO" id="GO:0070062">
    <property type="term" value="C:extracellular exosome"/>
    <property type="evidence" value="ECO:0007005"/>
    <property type="project" value="UniProtKB"/>
</dbReference>
<dbReference type="GO" id="GO:0000776">
    <property type="term" value="C:kinetochore"/>
    <property type="evidence" value="ECO:0000314"/>
    <property type="project" value="ComplexPortal"/>
</dbReference>
<dbReference type="GO" id="GO:0005828">
    <property type="term" value="C:kinetochore microtubule"/>
    <property type="evidence" value="ECO:0000314"/>
    <property type="project" value="ComplexPortal"/>
</dbReference>
<dbReference type="GO" id="GO:0005765">
    <property type="term" value="C:lysosomal membrane"/>
    <property type="evidence" value="ECO:0000314"/>
    <property type="project" value="ComplexPortal"/>
</dbReference>
<dbReference type="GO" id="GO:0016020">
    <property type="term" value="C:membrane"/>
    <property type="evidence" value="ECO:0007005"/>
    <property type="project" value="UniProtKB"/>
</dbReference>
<dbReference type="GO" id="GO:0030496">
    <property type="term" value="C:midbody"/>
    <property type="evidence" value="ECO:0000314"/>
    <property type="project" value="ComplexPortal"/>
</dbReference>
<dbReference type="GO" id="GO:0005771">
    <property type="term" value="C:multivesicular body"/>
    <property type="evidence" value="ECO:0000318"/>
    <property type="project" value="GO_Central"/>
</dbReference>
<dbReference type="GO" id="GO:0032585">
    <property type="term" value="C:multivesicular body membrane"/>
    <property type="evidence" value="ECO:0000314"/>
    <property type="project" value="ComplexPortal"/>
</dbReference>
<dbReference type="GO" id="GO:0005643">
    <property type="term" value="C:nuclear pore"/>
    <property type="evidence" value="ECO:0000314"/>
    <property type="project" value="ComplexPortal"/>
</dbReference>
<dbReference type="GO" id="GO:0005886">
    <property type="term" value="C:plasma membrane"/>
    <property type="evidence" value="ECO:0000314"/>
    <property type="project" value="ComplexPortal"/>
</dbReference>
<dbReference type="GO" id="GO:0044877">
    <property type="term" value="F:protein-containing complex binding"/>
    <property type="evidence" value="ECO:0000314"/>
    <property type="project" value="UniProtKB"/>
</dbReference>
<dbReference type="GO" id="GO:0097352">
    <property type="term" value="P:autophagosome maturation"/>
    <property type="evidence" value="ECO:0000315"/>
    <property type="project" value="ComplexPortal"/>
</dbReference>
<dbReference type="GO" id="GO:0006914">
    <property type="term" value="P:autophagy"/>
    <property type="evidence" value="ECO:0000315"/>
    <property type="project" value="ComplexPortal"/>
</dbReference>
<dbReference type="GO" id="GO:1904902">
    <property type="term" value="P:ESCRT III complex assembly"/>
    <property type="evidence" value="ECO:0000303"/>
    <property type="project" value="ParkinsonsUK-UCL"/>
</dbReference>
<dbReference type="GO" id="GO:1902774">
    <property type="term" value="P:late endosome to lysosome transport"/>
    <property type="evidence" value="ECO:0000315"/>
    <property type="project" value="ComplexPortal"/>
</dbReference>
<dbReference type="GO" id="GO:0032511">
    <property type="term" value="P:late endosome to vacuole transport via multivesicular body sorting pathway"/>
    <property type="evidence" value="ECO:0000318"/>
    <property type="project" value="GO_Central"/>
</dbReference>
<dbReference type="GO" id="GO:0016236">
    <property type="term" value="P:macroautophagy"/>
    <property type="evidence" value="ECO:0000304"/>
    <property type="project" value="ParkinsonsUK-UCL"/>
</dbReference>
<dbReference type="GO" id="GO:0090148">
    <property type="term" value="P:membrane fission"/>
    <property type="evidence" value="ECO:0000303"/>
    <property type="project" value="ComplexPortal"/>
</dbReference>
<dbReference type="GO" id="GO:0061952">
    <property type="term" value="P:midbody abscission"/>
    <property type="evidence" value="ECO:0000315"/>
    <property type="project" value="UniProtKB"/>
</dbReference>
<dbReference type="GO" id="GO:0007080">
    <property type="term" value="P:mitotic metaphase chromosome alignment"/>
    <property type="evidence" value="ECO:0000315"/>
    <property type="project" value="UniProtKB"/>
</dbReference>
<dbReference type="GO" id="GO:0036258">
    <property type="term" value="P:multivesicular body assembly"/>
    <property type="evidence" value="ECO:0000304"/>
    <property type="project" value="ParkinsonsUK-UCL"/>
</dbReference>
<dbReference type="GO" id="GO:0071985">
    <property type="term" value="P:multivesicular body sorting pathway"/>
    <property type="evidence" value="ECO:0000314"/>
    <property type="project" value="ComplexPortal"/>
</dbReference>
<dbReference type="GO" id="GO:0061763">
    <property type="term" value="P:multivesicular body-lysosome fusion"/>
    <property type="evidence" value="ECO:0000303"/>
    <property type="project" value="ComplexPortal"/>
</dbReference>
<dbReference type="GO" id="GO:0007175">
    <property type="term" value="P:negative regulation of epidermal growth factor-activated receptor activity"/>
    <property type="evidence" value="ECO:0000315"/>
    <property type="project" value="UniProtKB"/>
</dbReference>
<dbReference type="GO" id="GO:0031468">
    <property type="term" value="P:nuclear membrane reassembly"/>
    <property type="evidence" value="ECO:0000315"/>
    <property type="project" value="ComplexPortal"/>
</dbReference>
<dbReference type="GO" id="GO:0006997">
    <property type="term" value="P:nucleus organization"/>
    <property type="evidence" value="ECO:0000315"/>
    <property type="project" value="UniProtKB"/>
</dbReference>
<dbReference type="GO" id="GO:0001778">
    <property type="term" value="P:plasma membrane repair"/>
    <property type="evidence" value="ECO:0000314"/>
    <property type="project" value="ComplexPortal"/>
</dbReference>
<dbReference type="GO" id="GO:0015031">
    <property type="term" value="P:protein transport"/>
    <property type="evidence" value="ECO:0007669"/>
    <property type="project" value="UniProtKB-KW"/>
</dbReference>
<dbReference type="GO" id="GO:1901673">
    <property type="term" value="P:regulation of mitotic spindle assembly"/>
    <property type="evidence" value="ECO:0000315"/>
    <property type="project" value="ComplexPortal"/>
</dbReference>
<dbReference type="GO" id="GO:0042176">
    <property type="term" value="P:regulation of protein catabolic process"/>
    <property type="evidence" value="ECO:0000315"/>
    <property type="project" value="UniProtKB"/>
</dbReference>
<dbReference type="GO" id="GO:0043162">
    <property type="term" value="P:ubiquitin-dependent protein catabolic process via the multivesicular body sorting pathway"/>
    <property type="evidence" value="ECO:0000314"/>
    <property type="project" value="ComplexPortal"/>
</dbReference>
<dbReference type="GO" id="GO:0006900">
    <property type="term" value="P:vesicle budding from membrane"/>
    <property type="evidence" value="ECO:0000318"/>
    <property type="project" value="GO_Central"/>
</dbReference>
<dbReference type="GO" id="GO:0051469">
    <property type="term" value="P:vesicle fusion with vacuole"/>
    <property type="evidence" value="ECO:0000303"/>
    <property type="project" value="ComplexPortal"/>
</dbReference>
<dbReference type="GO" id="GO:0046761">
    <property type="term" value="P:viral budding from plasma membrane"/>
    <property type="evidence" value="ECO:0000314"/>
    <property type="project" value="ComplexPortal"/>
</dbReference>
<dbReference type="GO" id="GO:0039702">
    <property type="term" value="P:viral budding via host ESCRT complex"/>
    <property type="evidence" value="ECO:0000314"/>
    <property type="project" value="UniProtKB"/>
</dbReference>
<dbReference type="Gene3D" id="1.10.287.1060">
    <property type="entry name" value="ESAT-6-like"/>
    <property type="match status" value="1"/>
</dbReference>
<dbReference type="InterPro" id="IPR005024">
    <property type="entry name" value="Snf7_fam"/>
</dbReference>
<dbReference type="PANTHER" id="PTHR22761">
    <property type="entry name" value="CHARGED MULTIVESICULAR BODY PROTEIN"/>
    <property type="match status" value="1"/>
</dbReference>
<dbReference type="PANTHER" id="PTHR22761:SF5">
    <property type="entry name" value="CHARGED MULTIVESICULAR BODY PROTEIN 6"/>
    <property type="match status" value="1"/>
</dbReference>
<dbReference type="Pfam" id="PF03357">
    <property type="entry name" value="Snf7"/>
    <property type="match status" value="1"/>
</dbReference>
<proteinExistence type="evidence at protein level"/>
<accession>Q96FZ7</accession>
<accession>A8K7U0</accession>
<accession>Q53FU4</accession>
<accession>Q9HAE8</accession>
<protein>
    <recommendedName>
        <fullName>Charged multivesicular body protein 6</fullName>
    </recommendedName>
    <alternativeName>
        <fullName>Chromatin-modifying protein 6</fullName>
    </alternativeName>
    <alternativeName>
        <fullName>Vacuolar protein sorting-associated protein 20</fullName>
        <shortName>Vps20</shortName>
        <shortName>hVps20</shortName>
    </alternativeName>
</protein>
<name>CHMP6_HUMAN</name>